<comment type="caution">
    <text evidence="2">Product of a dubious CDS prediction.</text>
</comment>
<protein>
    <recommendedName>
        <fullName>Putative uncharacterized protein encoded by LINC00696</fullName>
    </recommendedName>
</protein>
<evidence type="ECO:0000256" key="1">
    <source>
        <dbReference type="SAM" id="MobiDB-lite"/>
    </source>
</evidence>
<evidence type="ECO:0000305" key="2"/>
<dbReference type="EMBL" id="AK127958">
    <property type="status" value="NOT_ANNOTATED_CDS"/>
    <property type="molecule type" value="mRNA"/>
</dbReference>
<dbReference type="EMBL" id="AC115284">
    <property type="status" value="NOT_ANNOTATED_CDS"/>
    <property type="molecule type" value="Genomic_DNA"/>
</dbReference>
<dbReference type="FunCoup" id="Q6ZRV3">
    <property type="interactions" value="1"/>
</dbReference>
<dbReference type="IntAct" id="Q6ZRV3">
    <property type="interactions" value="1"/>
</dbReference>
<dbReference type="BioMuta" id="HGNC:34426"/>
<dbReference type="DMDM" id="74711261"/>
<dbReference type="AGR" id="HGNC:34426"/>
<dbReference type="GeneCards" id="LINC00696"/>
<dbReference type="HGNC" id="HGNC:34426">
    <property type="gene designation" value="LINC00696"/>
</dbReference>
<dbReference type="neXtProt" id="NX_Q6ZRV3"/>
<dbReference type="InParanoid" id="Q6ZRV3"/>
<dbReference type="PAN-GO" id="Q6ZRV3">
    <property type="GO annotations" value="0 GO annotations based on evolutionary models"/>
</dbReference>
<dbReference type="Pharos" id="Q6ZRV3">
    <property type="development level" value="Tdark"/>
</dbReference>
<dbReference type="Proteomes" id="UP000005640">
    <property type="component" value="Unplaced"/>
</dbReference>
<dbReference type="RNAct" id="Q6ZRV3">
    <property type="molecule type" value="protein"/>
</dbReference>
<name>CC074_HUMAN</name>
<sequence>MQSVDSMLGTVGGCGGGEAASTFSKDPSGCCVGNDCRDGGRGLERRHGRWSRGEGGESGLCSGGQMASEIEYWDGLAISVMEVEKAFGSTNVLWKTEPFSLWACTAACPPSLSPTLLALGLPRDGKELAEQGSLWTVLEPGGDWSHSQSQLGTPGRGKGALGF</sequence>
<reference key="1">
    <citation type="journal article" date="2004" name="Nat. Genet.">
        <title>Complete sequencing and characterization of 21,243 full-length human cDNAs.</title>
        <authorList>
            <person name="Ota T."/>
            <person name="Suzuki Y."/>
            <person name="Nishikawa T."/>
            <person name="Otsuki T."/>
            <person name="Sugiyama T."/>
            <person name="Irie R."/>
            <person name="Wakamatsu A."/>
            <person name="Hayashi K."/>
            <person name="Sato H."/>
            <person name="Nagai K."/>
            <person name="Kimura K."/>
            <person name="Makita H."/>
            <person name="Sekine M."/>
            <person name="Obayashi M."/>
            <person name="Nishi T."/>
            <person name="Shibahara T."/>
            <person name="Tanaka T."/>
            <person name="Ishii S."/>
            <person name="Yamamoto J."/>
            <person name="Saito K."/>
            <person name="Kawai Y."/>
            <person name="Isono Y."/>
            <person name="Nakamura Y."/>
            <person name="Nagahari K."/>
            <person name="Murakami K."/>
            <person name="Yasuda T."/>
            <person name="Iwayanagi T."/>
            <person name="Wagatsuma M."/>
            <person name="Shiratori A."/>
            <person name="Sudo H."/>
            <person name="Hosoiri T."/>
            <person name="Kaku Y."/>
            <person name="Kodaira H."/>
            <person name="Kondo H."/>
            <person name="Sugawara M."/>
            <person name="Takahashi M."/>
            <person name="Kanda K."/>
            <person name="Yokoi T."/>
            <person name="Furuya T."/>
            <person name="Kikkawa E."/>
            <person name="Omura Y."/>
            <person name="Abe K."/>
            <person name="Kamihara K."/>
            <person name="Katsuta N."/>
            <person name="Sato K."/>
            <person name="Tanikawa M."/>
            <person name="Yamazaki M."/>
            <person name="Ninomiya K."/>
            <person name="Ishibashi T."/>
            <person name="Yamashita H."/>
            <person name="Murakawa K."/>
            <person name="Fujimori K."/>
            <person name="Tanai H."/>
            <person name="Kimata M."/>
            <person name="Watanabe M."/>
            <person name="Hiraoka S."/>
            <person name="Chiba Y."/>
            <person name="Ishida S."/>
            <person name="Ono Y."/>
            <person name="Takiguchi S."/>
            <person name="Watanabe S."/>
            <person name="Yosida M."/>
            <person name="Hotuta T."/>
            <person name="Kusano J."/>
            <person name="Kanehori K."/>
            <person name="Takahashi-Fujii A."/>
            <person name="Hara H."/>
            <person name="Tanase T.-O."/>
            <person name="Nomura Y."/>
            <person name="Togiya S."/>
            <person name="Komai F."/>
            <person name="Hara R."/>
            <person name="Takeuchi K."/>
            <person name="Arita M."/>
            <person name="Imose N."/>
            <person name="Musashino K."/>
            <person name="Yuuki H."/>
            <person name="Oshima A."/>
            <person name="Sasaki N."/>
            <person name="Aotsuka S."/>
            <person name="Yoshikawa Y."/>
            <person name="Matsunawa H."/>
            <person name="Ichihara T."/>
            <person name="Shiohata N."/>
            <person name="Sano S."/>
            <person name="Moriya S."/>
            <person name="Momiyama H."/>
            <person name="Satoh N."/>
            <person name="Takami S."/>
            <person name="Terashima Y."/>
            <person name="Suzuki O."/>
            <person name="Nakagawa S."/>
            <person name="Senoh A."/>
            <person name="Mizoguchi H."/>
            <person name="Goto Y."/>
            <person name="Shimizu F."/>
            <person name="Wakebe H."/>
            <person name="Hishigaki H."/>
            <person name="Watanabe T."/>
            <person name="Sugiyama A."/>
            <person name="Takemoto M."/>
            <person name="Kawakami B."/>
            <person name="Yamazaki M."/>
            <person name="Watanabe K."/>
            <person name="Kumagai A."/>
            <person name="Itakura S."/>
            <person name="Fukuzumi Y."/>
            <person name="Fujimori Y."/>
            <person name="Komiyama M."/>
            <person name="Tashiro H."/>
            <person name="Tanigami A."/>
            <person name="Fujiwara T."/>
            <person name="Ono T."/>
            <person name="Yamada K."/>
            <person name="Fujii Y."/>
            <person name="Ozaki K."/>
            <person name="Hirao M."/>
            <person name="Ohmori Y."/>
            <person name="Kawabata A."/>
            <person name="Hikiji T."/>
            <person name="Kobatake N."/>
            <person name="Inagaki H."/>
            <person name="Ikema Y."/>
            <person name="Okamoto S."/>
            <person name="Okitani R."/>
            <person name="Kawakami T."/>
            <person name="Noguchi S."/>
            <person name="Itoh T."/>
            <person name="Shigeta K."/>
            <person name="Senba T."/>
            <person name="Matsumura K."/>
            <person name="Nakajima Y."/>
            <person name="Mizuno T."/>
            <person name="Morinaga M."/>
            <person name="Sasaki M."/>
            <person name="Togashi T."/>
            <person name="Oyama M."/>
            <person name="Hata H."/>
            <person name="Watanabe M."/>
            <person name="Komatsu T."/>
            <person name="Mizushima-Sugano J."/>
            <person name="Satoh T."/>
            <person name="Shirai Y."/>
            <person name="Takahashi Y."/>
            <person name="Nakagawa K."/>
            <person name="Okumura K."/>
            <person name="Nagase T."/>
            <person name="Nomura N."/>
            <person name="Kikuchi H."/>
            <person name="Masuho Y."/>
            <person name="Yamashita R."/>
            <person name="Nakai K."/>
            <person name="Yada T."/>
            <person name="Nakamura Y."/>
            <person name="Ohara O."/>
            <person name="Isogai T."/>
            <person name="Sugano S."/>
        </authorList>
    </citation>
    <scope>NUCLEOTIDE SEQUENCE [LARGE SCALE MRNA]</scope>
    <source>
        <tissue>Esophagus</tissue>
    </source>
</reference>
<reference key="2">
    <citation type="journal article" date="2006" name="Nature">
        <title>The DNA sequence, annotation and analysis of human chromosome 3.</title>
        <authorList>
            <person name="Muzny D.M."/>
            <person name="Scherer S.E."/>
            <person name="Kaul R."/>
            <person name="Wang J."/>
            <person name="Yu J."/>
            <person name="Sudbrak R."/>
            <person name="Buhay C.J."/>
            <person name="Chen R."/>
            <person name="Cree A."/>
            <person name="Ding Y."/>
            <person name="Dugan-Rocha S."/>
            <person name="Gill R."/>
            <person name="Gunaratne P."/>
            <person name="Harris R.A."/>
            <person name="Hawes A.C."/>
            <person name="Hernandez J."/>
            <person name="Hodgson A.V."/>
            <person name="Hume J."/>
            <person name="Jackson A."/>
            <person name="Khan Z.M."/>
            <person name="Kovar-Smith C."/>
            <person name="Lewis L.R."/>
            <person name="Lozado R.J."/>
            <person name="Metzker M.L."/>
            <person name="Milosavljevic A."/>
            <person name="Miner G.R."/>
            <person name="Morgan M.B."/>
            <person name="Nazareth L.V."/>
            <person name="Scott G."/>
            <person name="Sodergren E."/>
            <person name="Song X.-Z."/>
            <person name="Steffen D."/>
            <person name="Wei S."/>
            <person name="Wheeler D.A."/>
            <person name="Wright M.W."/>
            <person name="Worley K.C."/>
            <person name="Yuan Y."/>
            <person name="Zhang Z."/>
            <person name="Adams C.Q."/>
            <person name="Ansari-Lari M.A."/>
            <person name="Ayele M."/>
            <person name="Brown M.J."/>
            <person name="Chen G."/>
            <person name="Chen Z."/>
            <person name="Clendenning J."/>
            <person name="Clerc-Blankenburg K.P."/>
            <person name="Chen R."/>
            <person name="Chen Z."/>
            <person name="Davis C."/>
            <person name="Delgado O."/>
            <person name="Dinh H.H."/>
            <person name="Dong W."/>
            <person name="Draper H."/>
            <person name="Ernst S."/>
            <person name="Fu G."/>
            <person name="Gonzalez-Garay M.L."/>
            <person name="Garcia D.K."/>
            <person name="Gillett W."/>
            <person name="Gu J."/>
            <person name="Hao B."/>
            <person name="Haugen E."/>
            <person name="Havlak P."/>
            <person name="He X."/>
            <person name="Hennig S."/>
            <person name="Hu S."/>
            <person name="Huang W."/>
            <person name="Jackson L.R."/>
            <person name="Jacob L.S."/>
            <person name="Kelly S.H."/>
            <person name="Kube M."/>
            <person name="Levy R."/>
            <person name="Li Z."/>
            <person name="Liu B."/>
            <person name="Liu J."/>
            <person name="Liu W."/>
            <person name="Lu J."/>
            <person name="Maheshwari M."/>
            <person name="Nguyen B.-V."/>
            <person name="Okwuonu G.O."/>
            <person name="Palmeiri A."/>
            <person name="Pasternak S."/>
            <person name="Perez L.M."/>
            <person name="Phelps K.A."/>
            <person name="Plopper F.J."/>
            <person name="Qiang B."/>
            <person name="Raymond C."/>
            <person name="Rodriguez R."/>
            <person name="Saenphimmachak C."/>
            <person name="Santibanez J."/>
            <person name="Shen H."/>
            <person name="Shen Y."/>
            <person name="Subramanian S."/>
            <person name="Tabor P.E."/>
            <person name="Verduzco D."/>
            <person name="Waldron L."/>
            <person name="Wang J."/>
            <person name="Wang J."/>
            <person name="Wang Q."/>
            <person name="Williams G.A."/>
            <person name="Wong G.K.-S."/>
            <person name="Yao Z."/>
            <person name="Zhang J."/>
            <person name="Zhang X."/>
            <person name="Zhao G."/>
            <person name="Zhou J."/>
            <person name="Zhou Y."/>
            <person name="Nelson D."/>
            <person name="Lehrach H."/>
            <person name="Reinhardt R."/>
            <person name="Naylor S.L."/>
            <person name="Yang H."/>
            <person name="Olson M."/>
            <person name="Weinstock G."/>
            <person name="Gibbs R.A."/>
        </authorList>
    </citation>
    <scope>NUCLEOTIDE SEQUENCE [LARGE SCALE GENOMIC DNA]</scope>
</reference>
<feature type="chain" id="PRO_0000339304" description="Putative uncharacterized protein encoded by LINC00696">
    <location>
        <begin position="1"/>
        <end position="163"/>
    </location>
</feature>
<feature type="region of interest" description="Disordered" evidence="1">
    <location>
        <begin position="144"/>
        <end position="163"/>
    </location>
</feature>
<feature type="compositionally biased region" description="Gly residues" evidence="1">
    <location>
        <begin position="154"/>
        <end position="163"/>
    </location>
</feature>
<keyword id="KW-1185">Reference proteome</keyword>
<organism>
    <name type="scientific">Homo sapiens</name>
    <name type="common">Human</name>
    <dbReference type="NCBI Taxonomy" id="9606"/>
    <lineage>
        <taxon>Eukaryota</taxon>
        <taxon>Metazoa</taxon>
        <taxon>Chordata</taxon>
        <taxon>Craniata</taxon>
        <taxon>Vertebrata</taxon>
        <taxon>Euteleostomi</taxon>
        <taxon>Mammalia</taxon>
        <taxon>Eutheria</taxon>
        <taxon>Euarchontoglires</taxon>
        <taxon>Primates</taxon>
        <taxon>Haplorrhini</taxon>
        <taxon>Catarrhini</taxon>
        <taxon>Hominidae</taxon>
        <taxon>Homo</taxon>
    </lineage>
</organism>
<proteinExistence type="uncertain"/>
<gene>
    <name type="primary">LINC00696</name>
    <name type="synonym">C3orf74</name>
</gene>
<accession>Q6ZRV3</accession>